<dbReference type="EMBL" id="AL035709">
    <property type="protein sequence ID" value="CAB38931.1"/>
    <property type="molecule type" value="Genomic_DNA"/>
</dbReference>
<dbReference type="EMBL" id="AL161592">
    <property type="protein sequence ID" value="CAB80448.1"/>
    <property type="molecule type" value="Genomic_DNA"/>
</dbReference>
<dbReference type="EMBL" id="CP002687">
    <property type="protein sequence ID" value="AEE86842.1"/>
    <property type="molecule type" value="Genomic_DNA"/>
</dbReference>
<dbReference type="EMBL" id="AF326892">
    <property type="protein sequence ID" value="AAG41474.1"/>
    <property type="molecule type" value="mRNA"/>
</dbReference>
<dbReference type="EMBL" id="AF339709">
    <property type="protein sequence ID" value="AAK00391.1"/>
    <property type="molecule type" value="mRNA"/>
</dbReference>
<dbReference type="EMBL" id="AF380645">
    <property type="protein sequence ID" value="AAK55726.1"/>
    <property type="molecule type" value="mRNA"/>
</dbReference>
<dbReference type="EMBL" id="AY056090">
    <property type="protein sequence ID" value="AAL06978.1"/>
    <property type="molecule type" value="mRNA"/>
</dbReference>
<dbReference type="EMBL" id="AK228845">
    <property type="protein sequence ID" value="BAF00740.1"/>
    <property type="molecule type" value="mRNA"/>
</dbReference>
<dbReference type="EMBL" id="AY088604">
    <property type="protein sequence ID" value="AAM66133.1"/>
    <property type="molecule type" value="mRNA"/>
</dbReference>
<dbReference type="PIR" id="T06030">
    <property type="entry name" value="T06030"/>
</dbReference>
<dbReference type="RefSeq" id="NP_195496.1">
    <molecule id="Q9T070-1"/>
    <property type="nucleotide sequence ID" value="NM_119944.4"/>
</dbReference>
<dbReference type="SMR" id="Q9T070"/>
<dbReference type="FunCoup" id="Q9T070">
    <property type="interactions" value="836"/>
</dbReference>
<dbReference type="STRING" id="3702.Q9T070"/>
<dbReference type="GlyGen" id="Q9T070">
    <property type="glycosylation" value="1 site"/>
</dbReference>
<dbReference type="iPTMnet" id="Q9T070"/>
<dbReference type="PaxDb" id="3702-AT4G37830.1"/>
<dbReference type="ProteomicsDB" id="224374">
    <molecule id="Q9T070-1"/>
</dbReference>
<dbReference type="DNASU" id="829939"/>
<dbReference type="EnsemblPlants" id="AT4G37830.1">
    <molecule id="Q9T070-1"/>
    <property type="protein sequence ID" value="AT4G37830.1"/>
    <property type="gene ID" value="AT4G37830"/>
</dbReference>
<dbReference type="GeneID" id="829939"/>
<dbReference type="Gramene" id="AT4G37830.1">
    <molecule id="Q9T070-1"/>
    <property type="protein sequence ID" value="AT4G37830.1"/>
    <property type="gene ID" value="AT4G37830"/>
</dbReference>
<dbReference type="KEGG" id="ath:AT4G37830"/>
<dbReference type="Araport" id="AT4G37830"/>
<dbReference type="TAIR" id="AT4G37830"/>
<dbReference type="eggNOG" id="KOG3469">
    <property type="taxonomic scope" value="Eukaryota"/>
</dbReference>
<dbReference type="HOGENOM" id="CLU_122515_2_1_1"/>
<dbReference type="InParanoid" id="Q9T070"/>
<dbReference type="OMA" id="HHHYDEP"/>
<dbReference type="PhylomeDB" id="Q9T070"/>
<dbReference type="PRO" id="PR:Q9T070"/>
<dbReference type="Proteomes" id="UP000006548">
    <property type="component" value="Chromosome 4"/>
</dbReference>
<dbReference type="ExpressionAtlas" id="Q9T070">
    <property type="expression patterns" value="baseline and differential"/>
</dbReference>
<dbReference type="GO" id="GO:0005743">
    <property type="term" value="C:mitochondrial inner membrane"/>
    <property type="evidence" value="ECO:0007669"/>
    <property type="project" value="UniProtKB-SubCell"/>
</dbReference>
<dbReference type="GO" id="GO:0005739">
    <property type="term" value="C:mitochondrion"/>
    <property type="evidence" value="ECO:0007005"/>
    <property type="project" value="TAIR"/>
</dbReference>
<dbReference type="FunFam" id="4.10.95.10:FF:000002">
    <property type="entry name" value="Cytochrome c oxidase subunit Via"/>
    <property type="match status" value="1"/>
</dbReference>
<dbReference type="Gene3D" id="4.10.95.10">
    <property type="entry name" value="Cytochrome c oxidase, subunit VIa"/>
    <property type="match status" value="1"/>
</dbReference>
<dbReference type="InterPro" id="IPR001349">
    <property type="entry name" value="Cyt_c_oxidase_su6a"/>
</dbReference>
<dbReference type="InterPro" id="IPR036418">
    <property type="entry name" value="Cyt_c_oxidase_su6a_sf"/>
</dbReference>
<dbReference type="PANTHER" id="PTHR11504">
    <property type="entry name" value="CYTOCHROME C OXIDASE POLYPEPTIDE VIA"/>
    <property type="match status" value="1"/>
</dbReference>
<dbReference type="PANTHER" id="PTHR11504:SF0">
    <property type="entry name" value="CYTOCHROME C OXIDASE SUBUNIT"/>
    <property type="match status" value="1"/>
</dbReference>
<dbReference type="PIRSF" id="PIRSF000277">
    <property type="entry name" value="COX6A1"/>
    <property type="match status" value="1"/>
</dbReference>
<dbReference type="SUPFAM" id="SSF81411">
    <property type="entry name" value="Mitochondrial cytochrome c oxidase subunit VIa"/>
    <property type="match status" value="1"/>
</dbReference>
<comment type="function">
    <text>This protein is one of the nuclear-coded polypeptide chains of cytochrome c oxidase, the terminal oxidase in mitochondrial electron transport.</text>
</comment>
<comment type="subcellular location">
    <subcellularLocation>
        <location evidence="1">Mitochondrion inner membrane</location>
    </subcellularLocation>
</comment>
<comment type="alternative products">
    <event type="alternative splicing"/>
    <isoform>
        <id>Q9T070-1</id>
        <name>1</name>
        <sequence type="displayed"/>
    </isoform>
    <text>A number of isoforms are produced. According to EST sequences.</text>
</comment>
<comment type="similarity">
    <text evidence="3">Belongs to the cytochrome c oxidase subunit 6A (TC 3.D.4.11) family.</text>
</comment>
<protein>
    <recommendedName>
        <fullName>Cytochrome c oxidase subunit 6a, mitochondrial</fullName>
        <shortName>AtCOX6a</shortName>
    </recommendedName>
</protein>
<reference key="1">
    <citation type="journal article" date="1999" name="Nature">
        <title>Sequence and analysis of chromosome 4 of the plant Arabidopsis thaliana.</title>
        <authorList>
            <person name="Mayer K.F.X."/>
            <person name="Schueller C."/>
            <person name="Wambutt R."/>
            <person name="Murphy G."/>
            <person name="Volckaert G."/>
            <person name="Pohl T."/>
            <person name="Duesterhoeft A."/>
            <person name="Stiekema W."/>
            <person name="Entian K.-D."/>
            <person name="Terryn N."/>
            <person name="Harris B."/>
            <person name="Ansorge W."/>
            <person name="Brandt P."/>
            <person name="Grivell L.A."/>
            <person name="Rieger M."/>
            <person name="Weichselgartner M."/>
            <person name="de Simone V."/>
            <person name="Obermaier B."/>
            <person name="Mache R."/>
            <person name="Mueller M."/>
            <person name="Kreis M."/>
            <person name="Delseny M."/>
            <person name="Puigdomenech P."/>
            <person name="Watson M."/>
            <person name="Schmidtheini T."/>
            <person name="Reichert B."/>
            <person name="Portetelle D."/>
            <person name="Perez-Alonso M."/>
            <person name="Boutry M."/>
            <person name="Bancroft I."/>
            <person name="Vos P."/>
            <person name="Hoheisel J."/>
            <person name="Zimmermann W."/>
            <person name="Wedler H."/>
            <person name="Ridley P."/>
            <person name="Langham S.-A."/>
            <person name="McCullagh B."/>
            <person name="Bilham L."/>
            <person name="Robben J."/>
            <person name="van der Schueren J."/>
            <person name="Grymonprez B."/>
            <person name="Chuang Y.-J."/>
            <person name="Vandenbussche F."/>
            <person name="Braeken M."/>
            <person name="Weltjens I."/>
            <person name="Voet M."/>
            <person name="Bastiaens I."/>
            <person name="Aert R."/>
            <person name="Defoor E."/>
            <person name="Weitzenegger T."/>
            <person name="Bothe G."/>
            <person name="Ramsperger U."/>
            <person name="Hilbert H."/>
            <person name="Braun M."/>
            <person name="Holzer E."/>
            <person name="Brandt A."/>
            <person name="Peters S."/>
            <person name="van Staveren M."/>
            <person name="Dirkse W."/>
            <person name="Mooijman P."/>
            <person name="Klein Lankhorst R."/>
            <person name="Rose M."/>
            <person name="Hauf J."/>
            <person name="Koetter P."/>
            <person name="Berneiser S."/>
            <person name="Hempel S."/>
            <person name="Feldpausch M."/>
            <person name="Lamberth S."/>
            <person name="Van den Daele H."/>
            <person name="De Keyser A."/>
            <person name="Buysshaert C."/>
            <person name="Gielen J."/>
            <person name="Villarroel R."/>
            <person name="De Clercq R."/>
            <person name="van Montagu M."/>
            <person name="Rogers J."/>
            <person name="Cronin A."/>
            <person name="Quail M.A."/>
            <person name="Bray-Allen S."/>
            <person name="Clark L."/>
            <person name="Doggett J."/>
            <person name="Hall S."/>
            <person name="Kay M."/>
            <person name="Lennard N."/>
            <person name="McLay K."/>
            <person name="Mayes R."/>
            <person name="Pettett A."/>
            <person name="Rajandream M.A."/>
            <person name="Lyne M."/>
            <person name="Benes V."/>
            <person name="Rechmann S."/>
            <person name="Borkova D."/>
            <person name="Bloecker H."/>
            <person name="Scharfe M."/>
            <person name="Grimm M."/>
            <person name="Loehnert T.-H."/>
            <person name="Dose S."/>
            <person name="de Haan M."/>
            <person name="Maarse A.C."/>
            <person name="Schaefer M."/>
            <person name="Mueller-Auer S."/>
            <person name="Gabel C."/>
            <person name="Fuchs M."/>
            <person name="Fartmann B."/>
            <person name="Granderath K."/>
            <person name="Dauner D."/>
            <person name="Herzl A."/>
            <person name="Neumann S."/>
            <person name="Argiriou A."/>
            <person name="Vitale D."/>
            <person name="Liguori R."/>
            <person name="Piravandi E."/>
            <person name="Massenet O."/>
            <person name="Quigley F."/>
            <person name="Clabauld G."/>
            <person name="Muendlein A."/>
            <person name="Felber R."/>
            <person name="Schnabl S."/>
            <person name="Hiller R."/>
            <person name="Schmidt W."/>
            <person name="Lecharny A."/>
            <person name="Aubourg S."/>
            <person name="Chefdor F."/>
            <person name="Cooke R."/>
            <person name="Berger C."/>
            <person name="Monfort A."/>
            <person name="Casacuberta E."/>
            <person name="Gibbons T."/>
            <person name="Weber N."/>
            <person name="Vandenbol M."/>
            <person name="Bargues M."/>
            <person name="Terol J."/>
            <person name="Torres A."/>
            <person name="Perez-Perez A."/>
            <person name="Purnelle B."/>
            <person name="Bent E."/>
            <person name="Johnson S."/>
            <person name="Tacon D."/>
            <person name="Jesse T."/>
            <person name="Heijnen L."/>
            <person name="Schwarz S."/>
            <person name="Scholler P."/>
            <person name="Heber S."/>
            <person name="Francs P."/>
            <person name="Bielke C."/>
            <person name="Frishman D."/>
            <person name="Haase D."/>
            <person name="Lemcke K."/>
            <person name="Mewes H.-W."/>
            <person name="Stocker S."/>
            <person name="Zaccaria P."/>
            <person name="Bevan M."/>
            <person name="Wilson R.K."/>
            <person name="de la Bastide M."/>
            <person name="Habermann K."/>
            <person name="Parnell L."/>
            <person name="Dedhia N."/>
            <person name="Gnoj L."/>
            <person name="Schutz K."/>
            <person name="Huang E."/>
            <person name="Spiegel L."/>
            <person name="Sekhon M."/>
            <person name="Murray J."/>
            <person name="Sheet P."/>
            <person name="Cordes M."/>
            <person name="Abu-Threideh J."/>
            <person name="Stoneking T."/>
            <person name="Kalicki J."/>
            <person name="Graves T."/>
            <person name="Harmon G."/>
            <person name="Edwards J."/>
            <person name="Latreille P."/>
            <person name="Courtney L."/>
            <person name="Cloud J."/>
            <person name="Abbott A."/>
            <person name="Scott K."/>
            <person name="Johnson D."/>
            <person name="Minx P."/>
            <person name="Bentley D."/>
            <person name="Fulton B."/>
            <person name="Miller N."/>
            <person name="Greco T."/>
            <person name="Kemp K."/>
            <person name="Kramer J."/>
            <person name="Fulton L."/>
            <person name="Mardis E."/>
            <person name="Dante M."/>
            <person name="Pepin K."/>
            <person name="Hillier L.W."/>
            <person name="Nelson J."/>
            <person name="Spieth J."/>
            <person name="Ryan E."/>
            <person name="Andrews S."/>
            <person name="Geisel C."/>
            <person name="Layman D."/>
            <person name="Du H."/>
            <person name="Ali J."/>
            <person name="Berghoff A."/>
            <person name="Jones K."/>
            <person name="Drone K."/>
            <person name="Cotton M."/>
            <person name="Joshu C."/>
            <person name="Antonoiu B."/>
            <person name="Zidanic M."/>
            <person name="Strong C."/>
            <person name="Sun H."/>
            <person name="Lamar B."/>
            <person name="Yordan C."/>
            <person name="Ma P."/>
            <person name="Zhong J."/>
            <person name="Preston R."/>
            <person name="Vil D."/>
            <person name="Shekher M."/>
            <person name="Matero A."/>
            <person name="Shah R."/>
            <person name="Swaby I.K."/>
            <person name="O'Shaughnessy A."/>
            <person name="Rodriguez M."/>
            <person name="Hoffman J."/>
            <person name="Till S."/>
            <person name="Granat S."/>
            <person name="Shohdy N."/>
            <person name="Hasegawa A."/>
            <person name="Hameed A."/>
            <person name="Lodhi M."/>
            <person name="Johnson A."/>
            <person name="Chen E."/>
            <person name="Marra M.A."/>
            <person name="Martienssen R."/>
            <person name="McCombie W.R."/>
        </authorList>
    </citation>
    <scope>NUCLEOTIDE SEQUENCE [LARGE SCALE GENOMIC DNA]</scope>
    <source>
        <strain>cv. Columbia</strain>
    </source>
</reference>
<reference key="2">
    <citation type="journal article" date="2017" name="Plant J.">
        <title>Araport11: a complete reannotation of the Arabidopsis thaliana reference genome.</title>
        <authorList>
            <person name="Cheng C.Y."/>
            <person name="Krishnakumar V."/>
            <person name="Chan A.P."/>
            <person name="Thibaud-Nissen F."/>
            <person name="Schobel S."/>
            <person name="Town C.D."/>
        </authorList>
    </citation>
    <scope>GENOME REANNOTATION</scope>
    <source>
        <strain>cv. Columbia</strain>
    </source>
</reference>
<reference key="3">
    <citation type="journal article" date="2003" name="Science">
        <title>Empirical analysis of transcriptional activity in the Arabidopsis genome.</title>
        <authorList>
            <person name="Yamada K."/>
            <person name="Lim J."/>
            <person name="Dale J.M."/>
            <person name="Chen H."/>
            <person name="Shinn P."/>
            <person name="Palm C.J."/>
            <person name="Southwick A.M."/>
            <person name="Wu H.C."/>
            <person name="Kim C.J."/>
            <person name="Nguyen M."/>
            <person name="Pham P.K."/>
            <person name="Cheuk R.F."/>
            <person name="Karlin-Newmann G."/>
            <person name="Liu S.X."/>
            <person name="Lam B."/>
            <person name="Sakano H."/>
            <person name="Wu T."/>
            <person name="Yu G."/>
            <person name="Miranda M."/>
            <person name="Quach H.L."/>
            <person name="Tripp M."/>
            <person name="Chang C.H."/>
            <person name="Lee J.M."/>
            <person name="Toriumi M.J."/>
            <person name="Chan M.M."/>
            <person name="Tang C.C."/>
            <person name="Onodera C.S."/>
            <person name="Deng J.M."/>
            <person name="Akiyama K."/>
            <person name="Ansari Y."/>
            <person name="Arakawa T."/>
            <person name="Banh J."/>
            <person name="Banno F."/>
            <person name="Bowser L."/>
            <person name="Brooks S.Y."/>
            <person name="Carninci P."/>
            <person name="Chao Q."/>
            <person name="Choy N."/>
            <person name="Enju A."/>
            <person name="Goldsmith A.D."/>
            <person name="Gurjal M."/>
            <person name="Hansen N.F."/>
            <person name="Hayashizaki Y."/>
            <person name="Johnson-Hopson C."/>
            <person name="Hsuan V.W."/>
            <person name="Iida K."/>
            <person name="Karnes M."/>
            <person name="Khan S."/>
            <person name="Koesema E."/>
            <person name="Ishida J."/>
            <person name="Jiang P.X."/>
            <person name="Jones T."/>
            <person name="Kawai J."/>
            <person name="Kamiya A."/>
            <person name="Meyers C."/>
            <person name="Nakajima M."/>
            <person name="Narusaka M."/>
            <person name="Seki M."/>
            <person name="Sakurai T."/>
            <person name="Satou M."/>
            <person name="Tamse R."/>
            <person name="Vaysberg M."/>
            <person name="Wallender E.K."/>
            <person name="Wong C."/>
            <person name="Yamamura Y."/>
            <person name="Yuan S."/>
            <person name="Shinozaki K."/>
            <person name="Davis R.W."/>
            <person name="Theologis A."/>
            <person name="Ecker J.R."/>
        </authorList>
    </citation>
    <scope>NUCLEOTIDE SEQUENCE [LARGE SCALE MRNA]</scope>
    <source>
        <strain>cv. Columbia</strain>
    </source>
</reference>
<reference key="4">
    <citation type="submission" date="2006-07" db="EMBL/GenBank/DDBJ databases">
        <title>Large-scale analysis of RIKEN Arabidopsis full-length (RAFL) cDNAs.</title>
        <authorList>
            <person name="Totoki Y."/>
            <person name="Seki M."/>
            <person name="Ishida J."/>
            <person name="Nakajima M."/>
            <person name="Enju A."/>
            <person name="Kamiya A."/>
            <person name="Narusaka M."/>
            <person name="Shin-i T."/>
            <person name="Nakagawa M."/>
            <person name="Sakamoto N."/>
            <person name="Oishi K."/>
            <person name="Kohara Y."/>
            <person name="Kobayashi M."/>
            <person name="Toyoda A."/>
            <person name="Sakaki Y."/>
            <person name="Sakurai T."/>
            <person name="Iida K."/>
            <person name="Akiyama K."/>
            <person name="Satou M."/>
            <person name="Toyoda T."/>
            <person name="Konagaya A."/>
            <person name="Carninci P."/>
            <person name="Kawai J."/>
            <person name="Hayashizaki Y."/>
            <person name="Shinozaki K."/>
        </authorList>
    </citation>
    <scope>NUCLEOTIDE SEQUENCE [LARGE SCALE MRNA]</scope>
    <source>
        <strain>cv. Columbia</strain>
    </source>
</reference>
<reference key="5">
    <citation type="submission" date="2002-03" db="EMBL/GenBank/DDBJ databases">
        <title>Full-length cDNA from Arabidopsis thaliana.</title>
        <authorList>
            <person name="Brover V.V."/>
            <person name="Troukhan M.E."/>
            <person name="Alexandrov N.A."/>
            <person name="Lu Y.-P."/>
            <person name="Flavell R.B."/>
            <person name="Feldmann K.A."/>
        </authorList>
    </citation>
    <scope>NUCLEOTIDE SEQUENCE [LARGE SCALE MRNA]</scope>
</reference>
<organism>
    <name type="scientific">Arabidopsis thaliana</name>
    <name type="common">Mouse-ear cress</name>
    <dbReference type="NCBI Taxonomy" id="3702"/>
    <lineage>
        <taxon>Eukaryota</taxon>
        <taxon>Viridiplantae</taxon>
        <taxon>Streptophyta</taxon>
        <taxon>Embryophyta</taxon>
        <taxon>Tracheophyta</taxon>
        <taxon>Spermatophyta</taxon>
        <taxon>Magnoliopsida</taxon>
        <taxon>eudicotyledons</taxon>
        <taxon>Gunneridae</taxon>
        <taxon>Pentapetalae</taxon>
        <taxon>rosids</taxon>
        <taxon>malvids</taxon>
        <taxon>Brassicales</taxon>
        <taxon>Brassicaceae</taxon>
        <taxon>Camelineae</taxon>
        <taxon>Arabidopsis</taxon>
    </lineage>
</organism>
<sequence length="102" mass="11235">MATAIVRSALSRAVTRAAPKTSVAPKRNFSSSAGHDDAYEAAKWEKITYLGIASCTALAVYVLSKGHHHGEDPPAYPHMHIRNKEFPWGPDGLFEVKHNKEH</sequence>
<gene>
    <name type="primary">COX6A</name>
    <name type="ordered locus">At4g37830</name>
    <name type="ORF">T28I19_110</name>
</gene>
<keyword id="KW-0025">Alternative splicing</keyword>
<keyword id="KW-0472">Membrane</keyword>
<keyword id="KW-0496">Mitochondrion</keyword>
<keyword id="KW-0999">Mitochondrion inner membrane</keyword>
<keyword id="KW-1185">Reference proteome</keyword>
<keyword id="KW-0809">Transit peptide</keyword>
<proteinExistence type="inferred from homology"/>
<name>COX6A_ARATH</name>
<evidence type="ECO:0000250" key="1"/>
<evidence type="ECO:0000255" key="2"/>
<evidence type="ECO:0000305" key="3"/>
<feature type="transit peptide" description="Mitochondrion" evidence="2">
    <location>
        <begin position="1"/>
        <end position="36"/>
    </location>
</feature>
<feature type="chain" id="PRO_0000412232" description="Cytochrome c oxidase subunit 6a, mitochondrial">
    <location>
        <begin position="37"/>
        <end position="102"/>
    </location>
</feature>
<feature type="sequence conflict" description="In Ref. 5; AAM66133." evidence="3" ref="5">
    <original>V</original>
    <variation>A</variation>
    <location>
        <position position="14"/>
    </location>
</feature>
<feature type="sequence conflict" description="In Ref. 5; AAM66133." evidence="3" ref="5">
    <original>H</original>
    <variation>P</variation>
    <location>
        <position position="69"/>
    </location>
</feature>
<accession>Q9T070</accession>
<accession>Q8L974</accession>